<organism>
    <name type="scientific">Bordetella parapertussis (strain 12822 / ATCC BAA-587 / NCTC 13253)</name>
    <dbReference type="NCBI Taxonomy" id="257311"/>
    <lineage>
        <taxon>Bacteria</taxon>
        <taxon>Pseudomonadati</taxon>
        <taxon>Pseudomonadota</taxon>
        <taxon>Betaproteobacteria</taxon>
        <taxon>Burkholderiales</taxon>
        <taxon>Alcaligenaceae</taxon>
        <taxon>Bordetella</taxon>
    </lineage>
</organism>
<gene>
    <name evidence="1" type="primary">nuoH</name>
    <name type="ordered locus">BPP3384</name>
</gene>
<protein>
    <recommendedName>
        <fullName evidence="1">NADH-quinone oxidoreductase subunit H</fullName>
        <ecNumber evidence="1">7.1.1.-</ecNumber>
    </recommendedName>
    <alternativeName>
        <fullName evidence="1">NADH dehydrogenase I subunit H</fullName>
    </alternativeName>
    <alternativeName>
        <fullName evidence="1">NDH-1 subunit H</fullName>
    </alternativeName>
</protein>
<comment type="function">
    <text evidence="1">NDH-1 shuttles electrons from NADH, via FMN and iron-sulfur (Fe-S) centers, to quinones in the respiratory chain. The immediate electron acceptor for the enzyme in this species is believed to be ubiquinone. Couples the redox reaction to proton translocation (for every two electrons transferred, four hydrogen ions are translocated across the cytoplasmic membrane), and thus conserves the redox energy in a proton gradient. This subunit may bind ubiquinone.</text>
</comment>
<comment type="catalytic activity">
    <reaction evidence="1">
        <text>a quinone + NADH + 5 H(+)(in) = a quinol + NAD(+) + 4 H(+)(out)</text>
        <dbReference type="Rhea" id="RHEA:57888"/>
        <dbReference type="ChEBI" id="CHEBI:15378"/>
        <dbReference type="ChEBI" id="CHEBI:24646"/>
        <dbReference type="ChEBI" id="CHEBI:57540"/>
        <dbReference type="ChEBI" id="CHEBI:57945"/>
        <dbReference type="ChEBI" id="CHEBI:132124"/>
    </reaction>
</comment>
<comment type="subunit">
    <text evidence="1">NDH-1 is composed of 14 different subunits. Subunits NuoA, H, J, K, L, M, N constitute the membrane sector of the complex.</text>
</comment>
<comment type="subcellular location">
    <subcellularLocation>
        <location evidence="1">Cell inner membrane</location>
        <topology evidence="1">Multi-pass membrane protein</topology>
    </subcellularLocation>
</comment>
<comment type="similarity">
    <text evidence="1">Belongs to the complex I subunit 1 family.</text>
</comment>
<name>NUOH_BORPA</name>
<sequence>MEWLNVLESHGQALLGPVAWMVVWSLVKIVVIAVPIILCVAYLTYWERKMIGAMHVRLGPTRVGFKGLLQPFADVFKLLTKEVVVPSAANKVLFVVAPVVTLMPALAAWAVVPFGPEVVLANVNAGLLYIMAITSIGVYGVIVAGWASNSKYAFLGALRASAQMVSYELAIGFVLVSVLLVSGSLNMSEIVLGQGRGWFAERGLTFLSWNWLPLLPLFIIYVISAVAETNRHPFDVVEGESEIVAGHMVEYSGMAFALFFLGEYANMILLSCMAAIMFLGGWMSPIDIAPLNWIPGWIWLGIKTFCVVSMFVWFRASFPRYRYDQIMRLGWKIFIPLTGVWLVVLAIWMQTPWNIWR</sequence>
<proteinExistence type="inferred from homology"/>
<feature type="chain" id="PRO_0000244898" description="NADH-quinone oxidoreductase subunit H">
    <location>
        <begin position="1"/>
        <end position="357"/>
    </location>
</feature>
<feature type="transmembrane region" description="Helical" evidence="1">
    <location>
        <begin position="18"/>
        <end position="38"/>
    </location>
</feature>
<feature type="transmembrane region" description="Helical" evidence="1">
    <location>
        <begin position="92"/>
        <end position="112"/>
    </location>
</feature>
<feature type="transmembrane region" description="Helical" evidence="1">
    <location>
        <begin position="127"/>
        <end position="147"/>
    </location>
</feature>
<feature type="transmembrane region" description="Helical" evidence="1">
    <location>
        <begin position="165"/>
        <end position="185"/>
    </location>
</feature>
<feature type="transmembrane region" description="Helical" evidence="1">
    <location>
        <begin position="206"/>
        <end position="226"/>
    </location>
</feature>
<feature type="transmembrane region" description="Helical" evidence="1">
    <location>
        <begin position="268"/>
        <end position="288"/>
    </location>
</feature>
<feature type="transmembrane region" description="Helical" evidence="1">
    <location>
        <begin position="294"/>
        <end position="314"/>
    </location>
</feature>
<feature type="transmembrane region" description="Helical" evidence="1">
    <location>
        <begin position="329"/>
        <end position="349"/>
    </location>
</feature>
<evidence type="ECO:0000255" key="1">
    <source>
        <dbReference type="HAMAP-Rule" id="MF_01350"/>
    </source>
</evidence>
<accession>Q7W5B4</accession>
<keyword id="KW-0997">Cell inner membrane</keyword>
<keyword id="KW-1003">Cell membrane</keyword>
<keyword id="KW-0472">Membrane</keyword>
<keyword id="KW-0520">NAD</keyword>
<keyword id="KW-0874">Quinone</keyword>
<keyword id="KW-1278">Translocase</keyword>
<keyword id="KW-0812">Transmembrane</keyword>
<keyword id="KW-1133">Transmembrane helix</keyword>
<keyword id="KW-0830">Ubiquinone</keyword>
<dbReference type="EC" id="7.1.1.-" evidence="1"/>
<dbReference type="EMBL" id="BX640433">
    <property type="protein sequence ID" value="CAE38669.1"/>
    <property type="molecule type" value="Genomic_DNA"/>
</dbReference>
<dbReference type="RefSeq" id="WP_003813926.1">
    <property type="nucleotide sequence ID" value="NC_002928.3"/>
</dbReference>
<dbReference type="SMR" id="Q7W5B4"/>
<dbReference type="GeneID" id="93205167"/>
<dbReference type="KEGG" id="bpa:BPP3384"/>
<dbReference type="HOGENOM" id="CLU_015134_0_1_4"/>
<dbReference type="Proteomes" id="UP000001421">
    <property type="component" value="Chromosome"/>
</dbReference>
<dbReference type="GO" id="GO:0005886">
    <property type="term" value="C:plasma membrane"/>
    <property type="evidence" value="ECO:0007669"/>
    <property type="project" value="UniProtKB-SubCell"/>
</dbReference>
<dbReference type="GO" id="GO:0003954">
    <property type="term" value="F:NADH dehydrogenase activity"/>
    <property type="evidence" value="ECO:0007669"/>
    <property type="project" value="TreeGrafter"/>
</dbReference>
<dbReference type="GO" id="GO:0016655">
    <property type="term" value="F:oxidoreductase activity, acting on NAD(P)H, quinone or similar compound as acceptor"/>
    <property type="evidence" value="ECO:0007669"/>
    <property type="project" value="UniProtKB-UniRule"/>
</dbReference>
<dbReference type="GO" id="GO:0048038">
    <property type="term" value="F:quinone binding"/>
    <property type="evidence" value="ECO:0007669"/>
    <property type="project" value="UniProtKB-KW"/>
</dbReference>
<dbReference type="GO" id="GO:0009060">
    <property type="term" value="P:aerobic respiration"/>
    <property type="evidence" value="ECO:0007669"/>
    <property type="project" value="TreeGrafter"/>
</dbReference>
<dbReference type="HAMAP" id="MF_01350">
    <property type="entry name" value="NDH1_NuoH"/>
    <property type="match status" value="1"/>
</dbReference>
<dbReference type="InterPro" id="IPR001694">
    <property type="entry name" value="NADH_UbQ_OxRdtase_su1/FPO"/>
</dbReference>
<dbReference type="InterPro" id="IPR018086">
    <property type="entry name" value="NADH_UbQ_OxRdtase_su1_CS"/>
</dbReference>
<dbReference type="NCBIfam" id="NF004741">
    <property type="entry name" value="PRK06076.1-2"/>
    <property type="match status" value="1"/>
</dbReference>
<dbReference type="NCBIfam" id="NF004742">
    <property type="entry name" value="PRK06076.1-3"/>
    <property type="match status" value="1"/>
</dbReference>
<dbReference type="PANTHER" id="PTHR11432">
    <property type="entry name" value="NADH DEHYDROGENASE SUBUNIT 1"/>
    <property type="match status" value="1"/>
</dbReference>
<dbReference type="PANTHER" id="PTHR11432:SF3">
    <property type="entry name" value="NADH-UBIQUINONE OXIDOREDUCTASE CHAIN 1"/>
    <property type="match status" value="1"/>
</dbReference>
<dbReference type="Pfam" id="PF00146">
    <property type="entry name" value="NADHdh"/>
    <property type="match status" value="1"/>
</dbReference>
<dbReference type="PROSITE" id="PS00668">
    <property type="entry name" value="COMPLEX1_ND1_2"/>
    <property type="match status" value="1"/>
</dbReference>
<reference key="1">
    <citation type="journal article" date="2003" name="Nat. Genet.">
        <title>Comparative analysis of the genome sequences of Bordetella pertussis, Bordetella parapertussis and Bordetella bronchiseptica.</title>
        <authorList>
            <person name="Parkhill J."/>
            <person name="Sebaihia M."/>
            <person name="Preston A."/>
            <person name="Murphy L.D."/>
            <person name="Thomson N.R."/>
            <person name="Harris D.E."/>
            <person name="Holden M.T.G."/>
            <person name="Churcher C.M."/>
            <person name="Bentley S.D."/>
            <person name="Mungall K.L."/>
            <person name="Cerdeno-Tarraga A.-M."/>
            <person name="Temple L."/>
            <person name="James K.D."/>
            <person name="Harris B."/>
            <person name="Quail M.A."/>
            <person name="Achtman M."/>
            <person name="Atkin R."/>
            <person name="Baker S."/>
            <person name="Basham D."/>
            <person name="Bason N."/>
            <person name="Cherevach I."/>
            <person name="Chillingworth T."/>
            <person name="Collins M."/>
            <person name="Cronin A."/>
            <person name="Davis P."/>
            <person name="Doggett J."/>
            <person name="Feltwell T."/>
            <person name="Goble A."/>
            <person name="Hamlin N."/>
            <person name="Hauser H."/>
            <person name="Holroyd S."/>
            <person name="Jagels K."/>
            <person name="Leather S."/>
            <person name="Moule S."/>
            <person name="Norberczak H."/>
            <person name="O'Neil S."/>
            <person name="Ormond D."/>
            <person name="Price C."/>
            <person name="Rabbinowitsch E."/>
            <person name="Rutter S."/>
            <person name="Sanders M."/>
            <person name="Saunders D."/>
            <person name="Seeger K."/>
            <person name="Sharp S."/>
            <person name="Simmonds M."/>
            <person name="Skelton J."/>
            <person name="Squares R."/>
            <person name="Squares S."/>
            <person name="Stevens K."/>
            <person name="Unwin L."/>
            <person name="Whitehead S."/>
            <person name="Barrell B.G."/>
            <person name="Maskell D.J."/>
        </authorList>
    </citation>
    <scope>NUCLEOTIDE SEQUENCE [LARGE SCALE GENOMIC DNA]</scope>
    <source>
        <strain>12822 / ATCC BAA-587 / NCTC 13253</strain>
    </source>
</reference>